<sequence>MTGKKRSASSSRWLQEHFSDKYVQQAQKKGLRSRAWFKLDEIQQSDKLFKPGMTVVDLGAAPGGWSQYVVTQIGGKGRIIACDLLPMDPIVGVDFLQGDFRDELVMKALLERVGDSKVQVVMSDMAPNMSGTPAVDIPRAMYLVELALEMCRDVLAPGGSFVVKVFQGEGFDEYLREIRSLFTKVKVRKPDSSRARSREVYIVATGRKP</sequence>
<organism>
    <name type="scientific">Citrobacter koseri (strain ATCC BAA-895 / CDC 4225-83 / SGSC4696)</name>
    <dbReference type="NCBI Taxonomy" id="290338"/>
    <lineage>
        <taxon>Bacteria</taxon>
        <taxon>Pseudomonadati</taxon>
        <taxon>Pseudomonadota</taxon>
        <taxon>Gammaproteobacteria</taxon>
        <taxon>Enterobacterales</taxon>
        <taxon>Enterobacteriaceae</taxon>
        <taxon>Citrobacter</taxon>
    </lineage>
</organism>
<name>RLME_CITK8</name>
<feature type="chain" id="PRO_1000087679" description="Ribosomal RNA large subunit methyltransferase E">
    <location>
        <begin position="1"/>
        <end position="209"/>
    </location>
</feature>
<feature type="active site" description="Proton acceptor" evidence="1">
    <location>
        <position position="164"/>
    </location>
</feature>
<feature type="binding site" evidence="1">
    <location>
        <position position="63"/>
    </location>
    <ligand>
        <name>S-adenosyl-L-methionine</name>
        <dbReference type="ChEBI" id="CHEBI:59789"/>
    </ligand>
</feature>
<feature type="binding site" evidence="1">
    <location>
        <position position="65"/>
    </location>
    <ligand>
        <name>S-adenosyl-L-methionine</name>
        <dbReference type="ChEBI" id="CHEBI:59789"/>
    </ligand>
</feature>
<feature type="binding site" evidence="1">
    <location>
        <position position="83"/>
    </location>
    <ligand>
        <name>S-adenosyl-L-methionine</name>
        <dbReference type="ChEBI" id="CHEBI:59789"/>
    </ligand>
</feature>
<feature type="binding site" evidence="1">
    <location>
        <position position="99"/>
    </location>
    <ligand>
        <name>S-adenosyl-L-methionine</name>
        <dbReference type="ChEBI" id="CHEBI:59789"/>
    </ligand>
</feature>
<feature type="binding site" evidence="1">
    <location>
        <position position="124"/>
    </location>
    <ligand>
        <name>S-adenosyl-L-methionine</name>
        <dbReference type="ChEBI" id="CHEBI:59789"/>
    </ligand>
</feature>
<proteinExistence type="inferred from homology"/>
<keyword id="KW-0963">Cytoplasm</keyword>
<keyword id="KW-0489">Methyltransferase</keyword>
<keyword id="KW-1185">Reference proteome</keyword>
<keyword id="KW-0698">rRNA processing</keyword>
<keyword id="KW-0949">S-adenosyl-L-methionine</keyword>
<keyword id="KW-0808">Transferase</keyword>
<protein>
    <recommendedName>
        <fullName evidence="1">Ribosomal RNA large subunit methyltransferase E</fullName>
        <ecNumber evidence="1">2.1.1.166</ecNumber>
    </recommendedName>
    <alternativeName>
        <fullName evidence="1">23S rRNA Um2552 methyltransferase</fullName>
    </alternativeName>
    <alternativeName>
        <fullName evidence="1">rRNA (uridine-2'-O-)-methyltransferase</fullName>
    </alternativeName>
</protein>
<dbReference type="EC" id="2.1.1.166" evidence="1"/>
<dbReference type="EMBL" id="CP000822">
    <property type="protein sequence ID" value="ABV15631.1"/>
    <property type="molecule type" value="Genomic_DNA"/>
</dbReference>
<dbReference type="RefSeq" id="WP_000145975.1">
    <property type="nucleotide sequence ID" value="NC_009792.1"/>
</dbReference>
<dbReference type="SMR" id="A8AQ68"/>
<dbReference type="STRING" id="290338.CKO_04580"/>
<dbReference type="GeneID" id="93778802"/>
<dbReference type="KEGG" id="cko:CKO_04580"/>
<dbReference type="HOGENOM" id="CLU_009422_4_0_6"/>
<dbReference type="OrthoDB" id="9790080at2"/>
<dbReference type="Proteomes" id="UP000008148">
    <property type="component" value="Chromosome"/>
</dbReference>
<dbReference type="GO" id="GO:0005737">
    <property type="term" value="C:cytoplasm"/>
    <property type="evidence" value="ECO:0007669"/>
    <property type="project" value="UniProtKB-SubCell"/>
</dbReference>
<dbReference type="GO" id="GO:0008650">
    <property type="term" value="F:rRNA (uridine-2'-O-)-methyltransferase activity"/>
    <property type="evidence" value="ECO:0007669"/>
    <property type="project" value="UniProtKB-UniRule"/>
</dbReference>
<dbReference type="CDD" id="cd02440">
    <property type="entry name" value="AdoMet_MTases"/>
    <property type="match status" value="1"/>
</dbReference>
<dbReference type="FunFam" id="3.40.50.150:FF:000005">
    <property type="entry name" value="Ribosomal RNA large subunit methyltransferase E"/>
    <property type="match status" value="1"/>
</dbReference>
<dbReference type="Gene3D" id="3.40.50.150">
    <property type="entry name" value="Vaccinia Virus protein VP39"/>
    <property type="match status" value="1"/>
</dbReference>
<dbReference type="HAMAP" id="MF_01547">
    <property type="entry name" value="RNA_methyltr_E"/>
    <property type="match status" value="1"/>
</dbReference>
<dbReference type="InterPro" id="IPR050082">
    <property type="entry name" value="RNA_methyltr_RlmE"/>
</dbReference>
<dbReference type="InterPro" id="IPR002877">
    <property type="entry name" value="RNA_MeTrfase_FtsJ_dom"/>
</dbReference>
<dbReference type="InterPro" id="IPR015507">
    <property type="entry name" value="rRNA-MeTfrase_E"/>
</dbReference>
<dbReference type="InterPro" id="IPR004512">
    <property type="entry name" value="rRNA_MeTrfase_gammaproteobac"/>
</dbReference>
<dbReference type="InterPro" id="IPR029063">
    <property type="entry name" value="SAM-dependent_MTases_sf"/>
</dbReference>
<dbReference type="NCBIfam" id="NF008390">
    <property type="entry name" value="PRK11188.1"/>
    <property type="match status" value="1"/>
</dbReference>
<dbReference type="NCBIfam" id="TIGR00438">
    <property type="entry name" value="rrmJ"/>
    <property type="match status" value="1"/>
</dbReference>
<dbReference type="PANTHER" id="PTHR10920">
    <property type="entry name" value="RIBOSOMAL RNA METHYLTRANSFERASE"/>
    <property type="match status" value="1"/>
</dbReference>
<dbReference type="PANTHER" id="PTHR10920:SF18">
    <property type="entry name" value="RRNA METHYLTRANSFERASE 2, MITOCHONDRIAL"/>
    <property type="match status" value="1"/>
</dbReference>
<dbReference type="Pfam" id="PF01728">
    <property type="entry name" value="FtsJ"/>
    <property type="match status" value="1"/>
</dbReference>
<dbReference type="PIRSF" id="PIRSF005461">
    <property type="entry name" value="23S_rRNA_mtase"/>
    <property type="match status" value="1"/>
</dbReference>
<dbReference type="SUPFAM" id="SSF53335">
    <property type="entry name" value="S-adenosyl-L-methionine-dependent methyltransferases"/>
    <property type="match status" value="1"/>
</dbReference>
<comment type="function">
    <text evidence="1">Specifically methylates the uridine in position 2552 of 23S rRNA at the 2'-O position of the ribose in the fully assembled 50S ribosomal subunit.</text>
</comment>
<comment type="catalytic activity">
    <reaction evidence="1">
        <text>uridine(2552) in 23S rRNA + S-adenosyl-L-methionine = 2'-O-methyluridine(2552) in 23S rRNA + S-adenosyl-L-homocysteine + H(+)</text>
        <dbReference type="Rhea" id="RHEA:42720"/>
        <dbReference type="Rhea" id="RHEA-COMP:10202"/>
        <dbReference type="Rhea" id="RHEA-COMP:10203"/>
        <dbReference type="ChEBI" id="CHEBI:15378"/>
        <dbReference type="ChEBI" id="CHEBI:57856"/>
        <dbReference type="ChEBI" id="CHEBI:59789"/>
        <dbReference type="ChEBI" id="CHEBI:65315"/>
        <dbReference type="ChEBI" id="CHEBI:74478"/>
        <dbReference type="EC" id="2.1.1.166"/>
    </reaction>
</comment>
<comment type="subcellular location">
    <subcellularLocation>
        <location evidence="1">Cytoplasm</location>
    </subcellularLocation>
</comment>
<comment type="similarity">
    <text evidence="1">Belongs to the class I-like SAM-binding methyltransferase superfamily. RNA methyltransferase RlmE family.</text>
</comment>
<evidence type="ECO:0000255" key="1">
    <source>
        <dbReference type="HAMAP-Rule" id="MF_01547"/>
    </source>
</evidence>
<reference key="1">
    <citation type="submission" date="2007-08" db="EMBL/GenBank/DDBJ databases">
        <authorList>
            <consortium name="The Citrobacter koseri Genome Sequencing Project"/>
            <person name="McClelland M."/>
            <person name="Sanderson E.K."/>
            <person name="Porwollik S."/>
            <person name="Spieth J."/>
            <person name="Clifton W.S."/>
            <person name="Latreille P."/>
            <person name="Courtney L."/>
            <person name="Wang C."/>
            <person name="Pepin K."/>
            <person name="Bhonagiri V."/>
            <person name="Nash W."/>
            <person name="Johnson M."/>
            <person name="Thiruvilangam P."/>
            <person name="Wilson R."/>
        </authorList>
    </citation>
    <scope>NUCLEOTIDE SEQUENCE [LARGE SCALE GENOMIC DNA]</scope>
    <source>
        <strain>ATCC BAA-895 / CDC 4225-83 / SGSC4696</strain>
    </source>
</reference>
<gene>
    <name evidence="1" type="primary">rlmE</name>
    <name evidence="1" type="synonym">ftsJ</name>
    <name evidence="1" type="synonym">rrmJ</name>
    <name type="ordered locus">CKO_04580</name>
</gene>
<accession>A8AQ68</accession>